<organism>
    <name type="scientific">Drosophila ananassae</name>
    <name type="common">Fruit fly</name>
    <dbReference type="NCBI Taxonomy" id="7217"/>
    <lineage>
        <taxon>Eukaryota</taxon>
        <taxon>Metazoa</taxon>
        <taxon>Ecdysozoa</taxon>
        <taxon>Arthropoda</taxon>
        <taxon>Hexapoda</taxon>
        <taxon>Insecta</taxon>
        <taxon>Pterygota</taxon>
        <taxon>Neoptera</taxon>
        <taxon>Endopterygota</taxon>
        <taxon>Diptera</taxon>
        <taxon>Brachycera</taxon>
        <taxon>Muscomorpha</taxon>
        <taxon>Ephydroidea</taxon>
        <taxon>Drosophilidae</taxon>
        <taxon>Drosophila</taxon>
        <taxon>Sophophora</taxon>
    </lineage>
</organism>
<gene>
    <name evidence="2" type="primary">eIF3b</name>
    <name evidence="2" type="synonym">eIF3-S9</name>
    <name type="ORF">GF11342</name>
</gene>
<dbReference type="EMBL" id="CH902619">
    <property type="protein sequence ID" value="EDV37570.1"/>
    <property type="molecule type" value="Genomic_DNA"/>
</dbReference>
<dbReference type="SMR" id="B3ME25"/>
<dbReference type="FunCoup" id="B3ME25">
    <property type="interactions" value="2644"/>
</dbReference>
<dbReference type="STRING" id="7217.B3ME25"/>
<dbReference type="EnsemblMetazoa" id="FBtr0116042">
    <property type="protein sequence ID" value="FBpp0114534"/>
    <property type="gene ID" value="FBgn0088382"/>
</dbReference>
<dbReference type="EnsemblMetazoa" id="XM_001960712.4">
    <property type="protein sequence ID" value="XP_001960748.1"/>
    <property type="gene ID" value="LOC6494206"/>
</dbReference>
<dbReference type="GeneID" id="6494206"/>
<dbReference type="KEGG" id="dan:6494206"/>
<dbReference type="CTD" id="8662"/>
<dbReference type="eggNOG" id="KOG2314">
    <property type="taxonomic scope" value="Eukaryota"/>
</dbReference>
<dbReference type="HOGENOM" id="CLU_011152_1_0_1"/>
<dbReference type="InParanoid" id="B3ME25"/>
<dbReference type="OMA" id="LWGGPQF"/>
<dbReference type="OrthoDB" id="10250414at2759"/>
<dbReference type="PhylomeDB" id="B3ME25"/>
<dbReference type="Proteomes" id="UP000007801">
    <property type="component" value="Unassembled WGS sequence"/>
</dbReference>
<dbReference type="GO" id="GO:0016282">
    <property type="term" value="C:eukaryotic 43S preinitiation complex"/>
    <property type="evidence" value="ECO:0007669"/>
    <property type="project" value="UniProtKB-UniRule"/>
</dbReference>
<dbReference type="GO" id="GO:0033290">
    <property type="term" value="C:eukaryotic 48S preinitiation complex"/>
    <property type="evidence" value="ECO:0007669"/>
    <property type="project" value="UniProtKB-UniRule"/>
</dbReference>
<dbReference type="GO" id="GO:0005852">
    <property type="term" value="C:eukaryotic translation initiation factor 3 complex"/>
    <property type="evidence" value="ECO:0000250"/>
    <property type="project" value="UniProtKB"/>
</dbReference>
<dbReference type="GO" id="GO:0003723">
    <property type="term" value="F:RNA binding"/>
    <property type="evidence" value="ECO:0007669"/>
    <property type="project" value="UniProtKB-UniRule"/>
</dbReference>
<dbReference type="GO" id="GO:0003743">
    <property type="term" value="F:translation initiation factor activity"/>
    <property type="evidence" value="ECO:0000250"/>
    <property type="project" value="UniProtKB"/>
</dbReference>
<dbReference type="GO" id="GO:0031369">
    <property type="term" value="F:translation initiation factor binding"/>
    <property type="evidence" value="ECO:0007669"/>
    <property type="project" value="InterPro"/>
</dbReference>
<dbReference type="GO" id="GO:0030707">
    <property type="term" value="P:follicle cell of egg chamber development"/>
    <property type="evidence" value="ECO:0007669"/>
    <property type="project" value="EnsemblMetazoa"/>
</dbReference>
<dbReference type="GO" id="GO:0001732">
    <property type="term" value="P:formation of cytoplasmic translation initiation complex"/>
    <property type="evidence" value="ECO:0007669"/>
    <property type="project" value="UniProtKB-UniRule"/>
</dbReference>
<dbReference type="GO" id="GO:0006446">
    <property type="term" value="P:regulation of translational initiation"/>
    <property type="evidence" value="ECO:0000250"/>
    <property type="project" value="UniProtKB"/>
</dbReference>
<dbReference type="CDD" id="cd12278">
    <property type="entry name" value="RRM_eIF3B"/>
    <property type="match status" value="1"/>
</dbReference>
<dbReference type="FunFam" id="2.130.10.10:FF:000884">
    <property type="entry name" value="Eukaryotic translation initiation factor 3 subunit B"/>
    <property type="match status" value="1"/>
</dbReference>
<dbReference type="FunFam" id="3.30.70.330:FF:000607">
    <property type="entry name" value="Eukaryotic translation initiation factor 3 subunit B"/>
    <property type="match status" value="1"/>
</dbReference>
<dbReference type="Gene3D" id="3.30.70.330">
    <property type="match status" value="1"/>
</dbReference>
<dbReference type="Gene3D" id="2.130.10.10">
    <property type="entry name" value="YVTN repeat-like/Quinoprotein amine dehydrogenase"/>
    <property type="match status" value="1"/>
</dbReference>
<dbReference type="HAMAP" id="MF_03001">
    <property type="entry name" value="eIF3b"/>
    <property type="match status" value="1"/>
</dbReference>
<dbReference type="InterPro" id="IPR011400">
    <property type="entry name" value="EIF3B"/>
</dbReference>
<dbReference type="InterPro" id="IPR034363">
    <property type="entry name" value="eIF3B_RRM"/>
</dbReference>
<dbReference type="InterPro" id="IPR012677">
    <property type="entry name" value="Nucleotide-bd_a/b_plait_sf"/>
</dbReference>
<dbReference type="InterPro" id="IPR035979">
    <property type="entry name" value="RBD_domain_sf"/>
</dbReference>
<dbReference type="InterPro" id="IPR000504">
    <property type="entry name" value="RRM_dom"/>
</dbReference>
<dbReference type="InterPro" id="IPR013979">
    <property type="entry name" value="TIF_beta_prop-like"/>
</dbReference>
<dbReference type="InterPro" id="IPR015943">
    <property type="entry name" value="WD40/YVTN_repeat-like_dom_sf"/>
</dbReference>
<dbReference type="PANTHER" id="PTHR14068">
    <property type="entry name" value="EUKARYOTIC TRANSLATION INITIATION FACTOR 3 EIF3 -RELATED"/>
    <property type="match status" value="1"/>
</dbReference>
<dbReference type="PANTHER" id="PTHR14068:SF0">
    <property type="entry name" value="EUKARYOTIC TRANSLATION INITIATION FACTOR 3 SUBUNIT B"/>
    <property type="match status" value="1"/>
</dbReference>
<dbReference type="Pfam" id="PF08662">
    <property type="entry name" value="eIF2A"/>
    <property type="match status" value="1"/>
</dbReference>
<dbReference type="Pfam" id="PF00076">
    <property type="entry name" value="RRM_1"/>
    <property type="match status" value="1"/>
</dbReference>
<dbReference type="PIRSF" id="PIRSF036424">
    <property type="entry name" value="eIF3b"/>
    <property type="match status" value="1"/>
</dbReference>
<dbReference type="SMART" id="SM00360">
    <property type="entry name" value="RRM"/>
    <property type="match status" value="1"/>
</dbReference>
<dbReference type="SUPFAM" id="SSF82171">
    <property type="entry name" value="DPP6 N-terminal domain-like"/>
    <property type="match status" value="1"/>
</dbReference>
<dbReference type="SUPFAM" id="SSF54928">
    <property type="entry name" value="RNA-binding domain, RBD"/>
    <property type="match status" value="1"/>
</dbReference>
<dbReference type="PROSITE" id="PS50102">
    <property type="entry name" value="RRM"/>
    <property type="match status" value="1"/>
</dbReference>
<protein>
    <recommendedName>
        <fullName evidence="2">Eukaryotic translation initiation factor 3 subunit B</fullName>
        <shortName evidence="2">eIF3b</shortName>
    </recommendedName>
    <alternativeName>
        <fullName evidence="2">Eukaryotic translation initiation factor 3 subunit 9</fullName>
    </alternativeName>
</protein>
<keyword id="KW-0175">Coiled coil</keyword>
<keyword id="KW-0963">Cytoplasm</keyword>
<keyword id="KW-0396">Initiation factor</keyword>
<keyword id="KW-0648">Protein biosynthesis</keyword>
<keyword id="KW-1185">Reference proteome</keyword>
<keyword id="KW-0677">Repeat</keyword>
<keyword id="KW-0694">RNA-binding</keyword>
<keyword id="KW-0853">WD repeat</keyword>
<comment type="function">
    <text evidence="2">RNA-binding component of the eukaryotic translation initiation factor 3 (eIF-3) complex, which is involved in protein synthesis of a specialized repertoire of mRNAs and, together with other initiation factors, stimulates binding of mRNA and methionyl-tRNAi to the 40S ribosome. The eIF-3 complex specifically targets and initiates translation of a subset of mRNAs involved in cell proliferation.</text>
</comment>
<comment type="subunit">
    <text evidence="1 2">Component of the eukaryotic translation initiation factor 3 (eIF-3) complex. The eIF-3 complex interacts with pix. Interacts with mxt (By similarity).</text>
</comment>
<comment type="subcellular location">
    <subcellularLocation>
        <location evidence="2">Cytoplasm</location>
    </subcellularLocation>
</comment>
<comment type="similarity">
    <text evidence="2">Belongs to the eIF-3 subunit B family.</text>
</comment>
<evidence type="ECO:0000250" key="1">
    <source>
        <dbReference type="UniProtKB" id="Q0E940"/>
    </source>
</evidence>
<evidence type="ECO:0000255" key="2">
    <source>
        <dbReference type="HAMAP-Rule" id="MF_03001"/>
    </source>
</evidence>
<evidence type="ECO:0000256" key="3">
    <source>
        <dbReference type="SAM" id="MobiDB-lite"/>
    </source>
</evidence>
<feature type="chain" id="PRO_0000363794" description="Eukaryotic translation initiation factor 3 subunit B">
    <location>
        <begin position="1"/>
        <end position="686"/>
    </location>
</feature>
<feature type="domain" description="RRM" evidence="2">
    <location>
        <begin position="53"/>
        <end position="137"/>
    </location>
</feature>
<feature type="repeat" description="WD 1">
    <location>
        <begin position="203"/>
        <end position="242"/>
    </location>
</feature>
<feature type="repeat" description="WD 2">
    <location>
        <begin position="289"/>
        <end position="327"/>
    </location>
</feature>
<feature type="repeat" description="WD 3">
    <location>
        <begin position="330"/>
        <end position="365"/>
    </location>
</feature>
<feature type="repeat" description="WD 4">
    <location>
        <begin position="438"/>
        <end position="480"/>
    </location>
</feature>
<feature type="repeat" description="WD 5">
    <location>
        <begin position="526"/>
        <end position="571"/>
    </location>
</feature>
<feature type="region of interest" description="Disordered" evidence="3">
    <location>
        <begin position="1"/>
        <end position="29"/>
    </location>
</feature>
<feature type="coiled-coil region" evidence="2">
    <location>
        <begin position="590"/>
        <end position="642"/>
    </location>
</feature>
<feature type="compositionally biased region" description="Acidic residues" evidence="3">
    <location>
        <begin position="11"/>
        <end position="21"/>
    </location>
</feature>
<reference key="1">
    <citation type="journal article" date="2007" name="Nature">
        <title>Evolution of genes and genomes on the Drosophila phylogeny.</title>
        <authorList>
            <consortium name="Drosophila 12 genomes consortium"/>
        </authorList>
    </citation>
    <scope>NUCLEOTIDE SEQUENCE [LARGE SCALE GENOMIC DNA]</scope>
    <source>
        <strain>Tucson 14024-0371.13</strain>
    </source>
</reference>
<accession>B3ME25</accession>
<proteinExistence type="inferred from homology"/>
<sequence>MAKKHAGADANDSDYNEEPNFEDPPGFVDTISDEDLLGDMLAQRPSEADGVESVVVVDNIPKVEPVRLEKLKSVINKLFSHCGDIVNVVYPVDEEGKTKGYAFMEYKHASQAEDAVKKLNNHRLDKNHTFAVNLFTDFQKYENIPEKWEPPTIQTFKVQSDLYNFINDPDAYDQYCVAAETAPNCVQVGFWQNTLPEPSELETRERFTDTFVKWSPLGTYVVTFHKPGVAIWGGSNFQKIQKFPHPGTQFVEFSPCENYLVTYGPTPTGQKIIIWDIRTGAEKRSFVADGMSVLSMFRWSHDDKFVARMGENSIHIYETPSFYLLDLKSIKIPGIRGFSWSPTDNVIAYWVEEQNQIPARVTLMEIPKKREIRNKNLFHVADCKLHWQKSGDYLCVKVDRYSKLKKDKKELDVKFLGMFYNFEIFHMREKEIPVDSVEIRELILAFAWEPIGNKFSIIHGEPNSSNVSFYEVNKGVKPSLVKRLEKKSCTHLFWSPRGQFIVMANLTMGTFEFVDSTNDYIISASPDHFRASEVEWDPTGRYVVTGVSSWKVKEDTGFNMYTFQGRIIKRTILKNFVQFLWRPRPPTLLAEEKQKEIKKNLKKYYAVFEQKDRLRLTRASKELLEKRAQLRETFMEYRNKRIAEWKDQKSRRVMLRGHVDTDNLETEEVDEEIVEFLVKEEITLLE</sequence>
<name>EIF3B_DROAN</name>